<sequence length="174" mass="18806">TPLGPARSLPQSFLLKCLEQVRKIQADGAELQERLCATHKLCHPEELVLLGHSLGIPQAPLSSCSSQSLQLTSCLDQLHGGLFLYQGLLQALAGISPELAPTLDTLQLDVTDFATNIWLQMEDLGVAPAVQPTQGTMPTFTSAFQRRAGGVLVASQLQRFLGLAYRGLRYLAEP</sequence>
<organism>
    <name type="scientific">Ovis aries</name>
    <name type="common">Sheep</name>
    <dbReference type="NCBI Taxonomy" id="9940"/>
    <lineage>
        <taxon>Eukaryota</taxon>
        <taxon>Metazoa</taxon>
        <taxon>Chordata</taxon>
        <taxon>Craniata</taxon>
        <taxon>Vertebrata</taxon>
        <taxon>Euteleostomi</taxon>
        <taxon>Mammalia</taxon>
        <taxon>Eutheria</taxon>
        <taxon>Laurasiatheria</taxon>
        <taxon>Artiodactyla</taxon>
        <taxon>Ruminantia</taxon>
        <taxon>Pecora</taxon>
        <taxon>Bovidae</taxon>
        <taxon>Caprinae</taxon>
        <taxon>Ovis</taxon>
    </lineage>
</organism>
<keyword id="KW-0202">Cytokine</keyword>
<keyword id="KW-1015">Disulfide bond</keyword>
<keyword id="KW-0325">Glycoprotein</keyword>
<keyword id="KW-0339">Growth factor</keyword>
<keyword id="KW-1185">Reference proteome</keyword>
<keyword id="KW-0964">Secreted</keyword>
<dbReference type="EMBL" id="L07939">
    <property type="protein sequence ID" value="AAA68006.1"/>
    <property type="molecule type" value="mRNA"/>
</dbReference>
<dbReference type="PIR" id="T10268">
    <property type="entry name" value="T10268"/>
</dbReference>
<dbReference type="SMR" id="Q28746"/>
<dbReference type="STRING" id="9940.ENSOARP00000013505"/>
<dbReference type="GlyCosmos" id="Q28746">
    <property type="glycosylation" value="1 site, No reported glycans"/>
</dbReference>
<dbReference type="Proteomes" id="UP000002356">
    <property type="component" value="Unplaced"/>
</dbReference>
<dbReference type="GO" id="GO:0005615">
    <property type="term" value="C:extracellular space"/>
    <property type="evidence" value="ECO:0007669"/>
    <property type="project" value="UniProtKB-KW"/>
</dbReference>
<dbReference type="GO" id="GO:0005125">
    <property type="term" value="F:cytokine activity"/>
    <property type="evidence" value="ECO:0007669"/>
    <property type="project" value="UniProtKB-KW"/>
</dbReference>
<dbReference type="GO" id="GO:0005130">
    <property type="term" value="F:granulocyte colony-stimulating factor receptor binding"/>
    <property type="evidence" value="ECO:0007669"/>
    <property type="project" value="TreeGrafter"/>
</dbReference>
<dbReference type="GO" id="GO:0008083">
    <property type="term" value="F:growth factor activity"/>
    <property type="evidence" value="ECO:0007669"/>
    <property type="project" value="UniProtKB-KW"/>
</dbReference>
<dbReference type="GO" id="GO:0006955">
    <property type="term" value="P:immune response"/>
    <property type="evidence" value="ECO:0007669"/>
    <property type="project" value="InterPro"/>
</dbReference>
<dbReference type="GO" id="GO:0045639">
    <property type="term" value="P:positive regulation of myeloid cell differentiation"/>
    <property type="evidence" value="ECO:0007669"/>
    <property type="project" value="InterPro"/>
</dbReference>
<dbReference type="FunFam" id="1.20.1250.10:FF:000021">
    <property type="entry name" value="Granulocyte colony-stimulating factor"/>
    <property type="match status" value="1"/>
</dbReference>
<dbReference type="Gene3D" id="1.20.1250.10">
    <property type="match status" value="1"/>
</dbReference>
<dbReference type="InterPro" id="IPR009079">
    <property type="entry name" value="4_helix_cytokine-like_core"/>
</dbReference>
<dbReference type="InterPro" id="IPR040117">
    <property type="entry name" value="GCSF/MGF"/>
</dbReference>
<dbReference type="InterPro" id="IPR030474">
    <property type="entry name" value="IL-6/GCSF/MGF"/>
</dbReference>
<dbReference type="InterPro" id="IPR030473">
    <property type="entry name" value="IL6/GCSF/MGF_CS"/>
</dbReference>
<dbReference type="PANTHER" id="PTHR10511">
    <property type="entry name" value="GRANULOCYTE COLONY-STIMULATING FACTOR"/>
    <property type="match status" value="1"/>
</dbReference>
<dbReference type="PANTHER" id="PTHR10511:SF2">
    <property type="entry name" value="GRANULOCYTE COLONY-STIMULATING FACTOR"/>
    <property type="match status" value="1"/>
</dbReference>
<dbReference type="Pfam" id="PF16647">
    <property type="entry name" value="GCSF"/>
    <property type="match status" value="1"/>
</dbReference>
<dbReference type="PRINTS" id="PR00433">
    <property type="entry name" value="IL6GCSFMGF"/>
</dbReference>
<dbReference type="SMART" id="SM00126">
    <property type="entry name" value="IL6"/>
    <property type="match status" value="1"/>
</dbReference>
<dbReference type="SUPFAM" id="SSF47266">
    <property type="entry name" value="4-helical cytokines"/>
    <property type="match status" value="1"/>
</dbReference>
<dbReference type="PROSITE" id="PS00254">
    <property type="entry name" value="INTERLEUKIN_6"/>
    <property type="match status" value="1"/>
</dbReference>
<gene>
    <name type="primary">CSF3</name>
</gene>
<reference key="1">
    <citation type="journal article" date="1994" name="DNA Seq.">
        <title>Cloning and sequencing of an ovine granulocyte colony-stimulating factor cDNA.</title>
        <authorList>
            <person name="O'Brien P.M."/>
            <person name="Seow H.F."/>
            <person name="Rothel J.S."/>
            <person name="Wood P.R."/>
        </authorList>
    </citation>
    <scope>NUCLEOTIDE SEQUENCE [MRNA]</scope>
</reference>
<comment type="function">
    <text evidence="1">Granulocyte/macrophage colony-stimulating factors are cytokines that act in hematopoiesis by controlling the production, differentiation, and function of 2 related white cell populations of the blood, the granulocytes and the monocytes-macrophages. This CSF induces granulocytes (By similarity).</text>
</comment>
<comment type="subunit">
    <text>Monomer.</text>
</comment>
<comment type="subcellular location">
    <subcellularLocation>
        <location>Secreted</location>
    </subcellularLocation>
</comment>
<comment type="PTM">
    <text evidence="1">O-glycosylated.</text>
</comment>
<comment type="similarity">
    <text evidence="2">Belongs to the IL-6 superfamily.</text>
</comment>
<proteinExistence type="evidence at transcript level"/>
<evidence type="ECO:0000250" key="1"/>
<evidence type="ECO:0000305" key="2"/>
<feature type="chain" id="PRO_0000058760" description="Granulocyte colony-stimulating factor">
    <location>
        <begin position="1"/>
        <end position="174"/>
    </location>
</feature>
<feature type="glycosylation site" description="O-linked (GalNAc...) threonine" evidence="1">
    <location>
        <position position="133"/>
    </location>
</feature>
<feature type="disulfide bond" evidence="1">
    <location>
        <begin position="36"/>
        <end position="42"/>
    </location>
</feature>
<feature type="disulfide bond" evidence="1">
    <location>
        <begin position="64"/>
        <end position="74"/>
    </location>
</feature>
<name>CSF3_SHEEP</name>
<protein>
    <recommendedName>
        <fullName>Granulocyte colony-stimulating factor</fullName>
        <shortName>G-CSF</shortName>
    </recommendedName>
</protein>
<accession>Q28746</accession>